<name>RNH2_BORBU</name>
<dbReference type="EC" id="3.1.26.4"/>
<dbReference type="EMBL" id="AE000783">
    <property type="protein sequence ID" value="AAC66435.1"/>
    <property type="molecule type" value="Genomic_DNA"/>
</dbReference>
<dbReference type="PIR" id="F70105">
    <property type="entry name" value="F70105"/>
</dbReference>
<dbReference type="RefSeq" id="NP_212180.1">
    <property type="nucleotide sequence ID" value="NC_001318.1"/>
</dbReference>
<dbReference type="RefSeq" id="WP_002656722.1">
    <property type="nucleotide sequence ID" value="NC_001318.1"/>
</dbReference>
<dbReference type="SMR" id="O51075"/>
<dbReference type="STRING" id="224326.BB_0046"/>
<dbReference type="PaxDb" id="224326-BB_0046"/>
<dbReference type="EnsemblBacteria" id="AAC66435">
    <property type="protein sequence ID" value="AAC66435"/>
    <property type="gene ID" value="BB_0046"/>
</dbReference>
<dbReference type="KEGG" id="bbu:BB_0046"/>
<dbReference type="PATRIC" id="fig|224326.49.peg.444"/>
<dbReference type="HOGENOM" id="CLU_036532_3_1_12"/>
<dbReference type="OrthoDB" id="9803420at2"/>
<dbReference type="Proteomes" id="UP000001807">
    <property type="component" value="Chromosome"/>
</dbReference>
<dbReference type="GO" id="GO:0005737">
    <property type="term" value="C:cytoplasm"/>
    <property type="evidence" value="ECO:0007669"/>
    <property type="project" value="UniProtKB-SubCell"/>
</dbReference>
<dbReference type="GO" id="GO:0032299">
    <property type="term" value="C:ribonuclease H2 complex"/>
    <property type="evidence" value="ECO:0007669"/>
    <property type="project" value="TreeGrafter"/>
</dbReference>
<dbReference type="GO" id="GO:0030145">
    <property type="term" value="F:manganese ion binding"/>
    <property type="evidence" value="ECO:0007669"/>
    <property type="project" value="UniProtKB-UniRule"/>
</dbReference>
<dbReference type="GO" id="GO:0003723">
    <property type="term" value="F:RNA binding"/>
    <property type="evidence" value="ECO:0007669"/>
    <property type="project" value="InterPro"/>
</dbReference>
<dbReference type="GO" id="GO:0004523">
    <property type="term" value="F:RNA-DNA hybrid ribonuclease activity"/>
    <property type="evidence" value="ECO:0007669"/>
    <property type="project" value="UniProtKB-UniRule"/>
</dbReference>
<dbReference type="GO" id="GO:0043137">
    <property type="term" value="P:DNA replication, removal of RNA primer"/>
    <property type="evidence" value="ECO:0007669"/>
    <property type="project" value="TreeGrafter"/>
</dbReference>
<dbReference type="GO" id="GO:0006298">
    <property type="term" value="P:mismatch repair"/>
    <property type="evidence" value="ECO:0007669"/>
    <property type="project" value="TreeGrafter"/>
</dbReference>
<dbReference type="CDD" id="cd07182">
    <property type="entry name" value="RNase_HII_bacteria_HII_like"/>
    <property type="match status" value="1"/>
</dbReference>
<dbReference type="Gene3D" id="3.30.420.10">
    <property type="entry name" value="Ribonuclease H-like superfamily/Ribonuclease H"/>
    <property type="match status" value="1"/>
</dbReference>
<dbReference type="HAMAP" id="MF_00052_B">
    <property type="entry name" value="RNase_HII_B"/>
    <property type="match status" value="1"/>
</dbReference>
<dbReference type="InterPro" id="IPR022898">
    <property type="entry name" value="RNase_HII"/>
</dbReference>
<dbReference type="InterPro" id="IPR001352">
    <property type="entry name" value="RNase_HII/HIII"/>
</dbReference>
<dbReference type="InterPro" id="IPR024567">
    <property type="entry name" value="RNase_HII/HIII_dom"/>
</dbReference>
<dbReference type="InterPro" id="IPR012337">
    <property type="entry name" value="RNaseH-like_sf"/>
</dbReference>
<dbReference type="InterPro" id="IPR036397">
    <property type="entry name" value="RNaseH_sf"/>
</dbReference>
<dbReference type="NCBIfam" id="NF000595">
    <property type="entry name" value="PRK00015.1-3"/>
    <property type="match status" value="1"/>
</dbReference>
<dbReference type="PANTHER" id="PTHR10954">
    <property type="entry name" value="RIBONUCLEASE H2 SUBUNIT A"/>
    <property type="match status" value="1"/>
</dbReference>
<dbReference type="PANTHER" id="PTHR10954:SF18">
    <property type="entry name" value="RIBONUCLEASE HII"/>
    <property type="match status" value="1"/>
</dbReference>
<dbReference type="Pfam" id="PF01351">
    <property type="entry name" value="RNase_HII"/>
    <property type="match status" value="1"/>
</dbReference>
<dbReference type="SUPFAM" id="SSF53098">
    <property type="entry name" value="Ribonuclease H-like"/>
    <property type="match status" value="1"/>
</dbReference>
<dbReference type="PROSITE" id="PS51975">
    <property type="entry name" value="RNASE_H_2"/>
    <property type="match status" value="1"/>
</dbReference>
<organism>
    <name type="scientific">Borreliella burgdorferi (strain ATCC 35210 / DSM 4680 / CIP 102532 / B31)</name>
    <name type="common">Borrelia burgdorferi</name>
    <dbReference type="NCBI Taxonomy" id="224326"/>
    <lineage>
        <taxon>Bacteria</taxon>
        <taxon>Pseudomonadati</taxon>
        <taxon>Spirochaetota</taxon>
        <taxon>Spirochaetia</taxon>
        <taxon>Spirochaetales</taxon>
        <taxon>Borreliaceae</taxon>
        <taxon>Borreliella</taxon>
    </lineage>
</organism>
<gene>
    <name type="primary">rnhB</name>
    <name type="ordered locus">BB_0046</name>
</gene>
<keyword id="KW-0963">Cytoplasm</keyword>
<keyword id="KW-0255">Endonuclease</keyword>
<keyword id="KW-0378">Hydrolase</keyword>
<keyword id="KW-0464">Manganese</keyword>
<keyword id="KW-0479">Metal-binding</keyword>
<keyword id="KW-0540">Nuclease</keyword>
<keyword id="KW-1185">Reference proteome</keyword>
<reference key="1">
    <citation type="journal article" date="1997" name="Nature">
        <title>Genomic sequence of a Lyme disease spirochaete, Borrelia burgdorferi.</title>
        <authorList>
            <person name="Fraser C.M."/>
            <person name="Casjens S."/>
            <person name="Huang W.M."/>
            <person name="Sutton G.G."/>
            <person name="Clayton R.A."/>
            <person name="Lathigra R."/>
            <person name="White O."/>
            <person name="Ketchum K.A."/>
            <person name="Dodson R.J."/>
            <person name="Hickey E.K."/>
            <person name="Gwinn M.L."/>
            <person name="Dougherty B.A."/>
            <person name="Tomb J.-F."/>
            <person name="Fleischmann R.D."/>
            <person name="Richardson D.L."/>
            <person name="Peterson J.D."/>
            <person name="Kerlavage A.R."/>
            <person name="Quackenbush J."/>
            <person name="Salzberg S.L."/>
            <person name="Hanson M."/>
            <person name="van Vugt R."/>
            <person name="Palmer N."/>
            <person name="Adams M.D."/>
            <person name="Gocayne J.D."/>
            <person name="Weidman J.F."/>
            <person name="Utterback T.R."/>
            <person name="Watthey L."/>
            <person name="McDonald L.A."/>
            <person name="Artiach P."/>
            <person name="Bowman C."/>
            <person name="Garland S.A."/>
            <person name="Fujii C."/>
            <person name="Cotton M.D."/>
            <person name="Horst K."/>
            <person name="Roberts K.M."/>
            <person name="Hatch B."/>
            <person name="Smith H.O."/>
            <person name="Venter J.C."/>
        </authorList>
    </citation>
    <scope>NUCLEOTIDE SEQUENCE [LARGE SCALE GENOMIC DNA]</scope>
    <source>
        <strain>ATCC 35210 / DSM 4680 / CIP 102532 / B31</strain>
    </source>
</reference>
<protein>
    <recommendedName>
        <fullName>Ribonuclease HII</fullName>
        <shortName>RNase HII</shortName>
        <ecNumber>3.1.26.4</ecNumber>
    </recommendedName>
</protein>
<feature type="chain" id="PRO_0000111545" description="Ribonuclease HII">
    <location>
        <begin position="1"/>
        <end position="181"/>
    </location>
</feature>
<feature type="domain" description="RNase H type-2" evidence="2">
    <location>
        <begin position="1"/>
        <end position="181"/>
    </location>
</feature>
<feature type="binding site" evidence="1">
    <location>
        <position position="6"/>
    </location>
    <ligand>
        <name>a divalent metal cation</name>
        <dbReference type="ChEBI" id="CHEBI:60240"/>
    </ligand>
</feature>
<feature type="binding site" evidence="1">
    <location>
        <position position="7"/>
    </location>
    <ligand>
        <name>a divalent metal cation</name>
        <dbReference type="ChEBI" id="CHEBI:60240"/>
    </ligand>
</feature>
<feature type="binding site" evidence="1">
    <location>
        <position position="98"/>
    </location>
    <ligand>
        <name>a divalent metal cation</name>
        <dbReference type="ChEBI" id="CHEBI:60240"/>
    </ligand>
</feature>
<accession>O51075</accession>
<proteinExistence type="inferred from homology"/>
<sequence>MICGIDEVGRGCIFGPILSAAVVFKKKPSFIKELDDSKKLKKEKREYLSSLILENSYYAFAEISNITIEKINIHNASLLAMQTAYENLKLNCSLVLVDGKFVPKITAKNVKAIIKGDSIIDEIKAASIIAKVKRDKLMDKYDKIYPLYLLKKNKGYPTKEHKNAIKKYGVLSLHRKNFKLI</sequence>
<evidence type="ECO:0000250" key="1"/>
<evidence type="ECO:0000255" key="2">
    <source>
        <dbReference type="PROSITE-ProRule" id="PRU01319"/>
    </source>
</evidence>
<evidence type="ECO:0000305" key="3"/>
<comment type="function">
    <text evidence="1">Endonuclease that specifically degrades the RNA of RNA-DNA hybrids.</text>
</comment>
<comment type="catalytic activity">
    <reaction>
        <text>Endonucleolytic cleavage to 5'-phosphomonoester.</text>
        <dbReference type="EC" id="3.1.26.4"/>
    </reaction>
</comment>
<comment type="cofactor">
    <cofactor evidence="1">
        <name>Mn(2+)</name>
        <dbReference type="ChEBI" id="CHEBI:29035"/>
    </cofactor>
    <cofactor evidence="1">
        <name>Mg(2+)</name>
        <dbReference type="ChEBI" id="CHEBI:18420"/>
    </cofactor>
    <text evidence="1">Manganese or magnesium. Binds 1 divalent metal ion per monomer in the absence of substrate. May bind a second metal ion after substrate binding.</text>
</comment>
<comment type="subcellular location">
    <subcellularLocation>
        <location evidence="3">Cytoplasm</location>
    </subcellularLocation>
</comment>
<comment type="similarity">
    <text evidence="3">Belongs to the RNase HII family.</text>
</comment>